<accession>A1BEE6</accession>
<organism>
    <name type="scientific">Chlorobium phaeobacteroides (strain DSM 266 / SMG 266 / 2430)</name>
    <dbReference type="NCBI Taxonomy" id="290317"/>
    <lineage>
        <taxon>Bacteria</taxon>
        <taxon>Pseudomonadati</taxon>
        <taxon>Chlorobiota</taxon>
        <taxon>Chlorobiia</taxon>
        <taxon>Chlorobiales</taxon>
        <taxon>Chlorobiaceae</taxon>
        <taxon>Chlorobium/Pelodictyon group</taxon>
        <taxon>Chlorobium</taxon>
    </lineage>
</organism>
<sequence>MKHLTGLCELPLYEIQRLLDLAAVFKKELRTKAPAFAPTLLSKKIALAFFENSTRTRFSFEIAAKHLGASTLNFTASSSSVSKGETLGDTIKNLEAMQVDAFVIRHPSSGAADLITGITSKSVINAGDGSHEHPTQALLDMFTLKEHFGSLEGLNVFILGDILHSRVARSNIFGMLTLGANVALCSPSTLLPPGTSDLGIRIFTDLDQAIQWADAAIVLRLQLERATGGYLPSLGEYAVHFGLTDERLERIRKHLLVLHPGPINREIEISSRVADRMQPPGFSSSLLLQQVTNGIAVRMAVLQTLLAE</sequence>
<reference key="1">
    <citation type="submission" date="2006-12" db="EMBL/GenBank/DDBJ databases">
        <title>Complete sequence of Chlorobium phaeobacteroides DSM 266.</title>
        <authorList>
            <consortium name="US DOE Joint Genome Institute"/>
            <person name="Copeland A."/>
            <person name="Lucas S."/>
            <person name="Lapidus A."/>
            <person name="Barry K."/>
            <person name="Detter J.C."/>
            <person name="Glavina del Rio T."/>
            <person name="Hammon N."/>
            <person name="Israni S."/>
            <person name="Pitluck S."/>
            <person name="Goltsman E."/>
            <person name="Schmutz J."/>
            <person name="Larimer F."/>
            <person name="Land M."/>
            <person name="Hauser L."/>
            <person name="Mikhailova N."/>
            <person name="Li T."/>
            <person name="Overmann J."/>
            <person name="Bryant D.A."/>
            <person name="Richardson P."/>
        </authorList>
    </citation>
    <scope>NUCLEOTIDE SEQUENCE [LARGE SCALE GENOMIC DNA]</scope>
    <source>
        <strain>DSM 266 / SMG 266 / 2430</strain>
    </source>
</reference>
<name>PYRB_CHLPD</name>
<evidence type="ECO:0000255" key="1">
    <source>
        <dbReference type="HAMAP-Rule" id="MF_00001"/>
    </source>
</evidence>
<keyword id="KW-0665">Pyrimidine biosynthesis</keyword>
<keyword id="KW-1185">Reference proteome</keyword>
<keyword id="KW-0808">Transferase</keyword>
<gene>
    <name evidence="1" type="primary">pyrB</name>
    <name type="ordered locus">Cpha266_0719</name>
</gene>
<dbReference type="EC" id="2.1.3.2" evidence="1"/>
<dbReference type="EMBL" id="CP000492">
    <property type="protein sequence ID" value="ABL64773.1"/>
    <property type="molecule type" value="Genomic_DNA"/>
</dbReference>
<dbReference type="RefSeq" id="WP_011744602.1">
    <property type="nucleotide sequence ID" value="NC_008639.1"/>
</dbReference>
<dbReference type="SMR" id="A1BEE6"/>
<dbReference type="STRING" id="290317.Cpha266_0719"/>
<dbReference type="KEGG" id="cph:Cpha266_0719"/>
<dbReference type="eggNOG" id="COG0540">
    <property type="taxonomic scope" value="Bacteria"/>
</dbReference>
<dbReference type="HOGENOM" id="CLU_043846_2_0_10"/>
<dbReference type="OrthoDB" id="9774690at2"/>
<dbReference type="UniPathway" id="UPA00070">
    <property type="reaction ID" value="UER00116"/>
</dbReference>
<dbReference type="Proteomes" id="UP000008701">
    <property type="component" value="Chromosome"/>
</dbReference>
<dbReference type="GO" id="GO:0005829">
    <property type="term" value="C:cytosol"/>
    <property type="evidence" value="ECO:0007669"/>
    <property type="project" value="TreeGrafter"/>
</dbReference>
<dbReference type="GO" id="GO:0016597">
    <property type="term" value="F:amino acid binding"/>
    <property type="evidence" value="ECO:0007669"/>
    <property type="project" value="InterPro"/>
</dbReference>
<dbReference type="GO" id="GO:0004070">
    <property type="term" value="F:aspartate carbamoyltransferase activity"/>
    <property type="evidence" value="ECO:0007669"/>
    <property type="project" value="UniProtKB-UniRule"/>
</dbReference>
<dbReference type="GO" id="GO:0006207">
    <property type="term" value="P:'de novo' pyrimidine nucleobase biosynthetic process"/>
    <property type="evidence" value="ECO:0007669"/>
    <property type="project" value="InterPro"/>
</dbReference>
<dbReference type="GO" id="GO:0044205">
    <property type="term" value="P:'de novo' UMP biosynthetic process"/>
    <property type="evidence" value="ECO:0007669"/>
    <property type="project" value="UniProtKB-UniRule"/>
</dbReference>
<dbReference type="GO" id="GO:0006520">
    <property type="term" value="P:amino acid metabolic process"/>
    <property type="evidence" value="ECO:0007669"/>
    <property type="project" value="InterPro"/>
</dbReference>
<dbReference type="Gene3D" id="3.40.50.1370">
    <property type="entry name" value="Aspartate/ornithine carbamoyltransferase"/>
    <property type="match status" value="2"/>
</dbReference>
<dbReference type="HAMAP" id="MF_00001">
    <property type="entry name" value="Asp_carb_tr"/>
    <property type="match status" value="1"/>
</dbReference>
<dbReference type="InterPro" id="IPR006132">
    <property type="entry name" value="Asp/Orn_carbamoyltranf_P-bd"/>
</dbReference>
<dbReference type="InterPro" id="IPR006130">
    <property type="entry name" value="Asp/Orn_carbamoylTrfase"/>
</dbReference>
<dbReference type="InterPro" id="IPR036901">
    <property type="entry name" value="Asp/Orn_carbamoylTrfase_sf"/>
</dbReference>
<dbReference type="InterPro" id="IPR002082">
    <property type="entry name" value="Asp_carbamoyltransf"/>
</dbReference>
<dbReference type="InterPro" id="IPR006131">
    <property type="entry name" value="Asp_carbamoyltransf_Asp/Orn-bd"/>
</dbReference>
<dbReference type="NCBIfam" id="TIGR00670">
    <property type="entry name" value="asp_carb_tr"/>
    <property type="match status" value="1"/>
</dbReference>
<dbReference type="NCBIfam" id="NF002032">
    <property type="entry name" value="PRK00856.1"/>
    <property type="match status" value="1"/>
</dbReference>
<dbReference type="PANTHER" id="PTHR45753:SF6">
    <property type="entry name" value="ASPARTATE CARBAMOYLTRANSFERASE"/>
    <property type="match status" value="1"/>
</dbReference>
<dbReference type="PANTHER" id="PTHR45753">
    <property type="entry name" value="ORNITHINE CARBAMOYLTRANSFERASE, MITOCHONDRIAL"/>
    <property type="match status" value="1"/>
</dbReference>
<dbReference type="Pfam" id="PF00185">
    <property type="entry name" value="OTCace"/>
    <property type="match status" value="1"/>
</dbReference>
<dbReference type="Pfam" id="PF02729">
    <property type="entry name" value="OTCace_N"/>
    <property type="match status" value="1"/>
</dbReference>
<dbReference type="PRINTS" id="PR00100">
    <property type="entry name" value="AOTCASE"/>
</dbReference>
<dbReference type="PRINTS" id="PR00101">
    <property type="entry name" value="ATCASE"/>
</dbReference>
<dbReference type="SUPFAM" id="SSF53671">
    <property type="entry name" value="Aspartate/ornithine carbamoyltransferase"/>
    <property type="match status" value="1"/>
</dbReference>
<dbReference type="PROSITE" id="PS00097">
    <property type="entry name" value="CARBAMOYLTRANSFERASE"/>
    <property type="match status" value="1"/>
</dbReference>
<comment type="function">
    <text evidence="1">Catalyzes the condensation of carbamoyl phosphate and aspartate to form carbamoyl aspartate and inorganic phosphate, the committed step in the de novo pyrimidine nucleotide biosynthesis pathway.</text>
</comment>
<comment type="catalytic activity">
    <reaction evidence="1">
        <text>carbamoyl phosphate + L-aspartate = N-carbamoyl-L-aspartate + phosphate + H(+)</text>
        <dbReference type="Rhea" id="RHEA:20013"/>
        <dbReference type="ChEBI" id="CHEBI:15378"/>
        <dbReference type="ChEBI" id="CHEBI:29991"/>
        <dbReference type="ChEBI" id="CHEBI:32814"/>
        <dbReference type="ChEBI" id="CHEBI:43474"/>
        <dbReference type="ChEBI" id="CHEBI:58228"/>
        <dbReference type="EC" id="2.1.3.2"/>
    </reaction>
</comment>
<comment type="pathway">
    <text evidence="1">Pyrimidine metabolism; UMP biosynthesis via de novo pathway; (S)-dihydroorotate from bicarbonate: step 2/3.</text>
</comment>
<comment type="subunit">
    <text evidence="1">Heterododecamer (2C3:3R2) of six catalytic PyrB chains organized as two trimers (C3), and six regulatory PyrI chains organized as three dimers (R2).</text>
</comment>
<comment type="similarity">
    <text evidence="1">Belongs to the aspartate/ornithine carbamoyltransferase superfamily. ATCase family.</text>
</comment>
<feature type="chain" id="PRO_0000301563" description="Aspartate carbamoyltransferase catalytic subunit">
    <location>
        <begin position="1"/>
        <end position="308"/>
    </location>
</feature>
<feature type="binding site" evidence="1">
    <location>
        <position position="55"/>
    </location>
    <ligand>
        <name>carbamoyl phosphate</name>
        <dbReference type="ChEBI" id="CHEBI:58228"/>
    </ligand>
</feature>
<feature type="binding site" evidence="1">
    <location>
        <position position="56"/>
    </location>
    <ligand>
        <name>carbamoyl phosphate</name>
        <dbReference type="ChEBI" id="CHEBI:58228"/>
    </ligand>
</feature>
<feature type="binding site" evidence="1">
    <location>
        <position position="83"/>
    </location>
    <ligand>
        <name>L-aspartate</name>
        <dbReference type="ChEBI" id="CHEBI:29991"/>
    </ligand>
</feature>
<feature type="binding site" evidence="1">
    <location>
        <position position="105"/>
    </location>
    <ligand>
        <name>carbamoyl phosphate</name>
        <dbReference type="ChEBI" id="CHEBI:58228"/>
    </ligand>
</feature>
<feature type="binding site" evidence="1">
    <location>
        <position position="133"/>
    </location>
    <ligand>
        <name>carbamoyl phosphate</name>
        <dbReference type="ChEBI" id="CHEBI:58228"/>
    </ligand>
</feature>
<feature type="binding site" evidence="1">
    <location>
        <position position="136"/>
    </location>
    <ligand>
        <name>carbamoyl phosphate</name>
        <dbReference type="ChEBI" id="CHEBI:58228"/>
    </ligand>
</feature>
<feature type="binding site" evidence="1">
    <location>
        <position position="166"/>
    </location>
    <ligand>
        <name>L-aspartate</name>
        <dbReference type="ChEBI" id="CHEBI:29991"/>
    </ligand>
</feature>
<feature type="binding site" evidence="1">
    <location>
        <position position="220"/>
    </location>
    <ligand>
        <name>L-aspartate</name>
        <dbReference type="ChEBI" id="CHEBI:29991"/>
    </ligand>
</feature>
<feature type="binding site" evidence="1">
    <location>
        <position position="261"/>
    </location>
    <ligand>
        <name>carbamoyl phosphate</name>
        <dbReference type="ChEBI" id="CHEBI:58228"/>
    </ligand>
</feature>
<feature type="binding site" evidence="1">
    <location>
        <position position="262"/>
    </location>
    <ligand>
        <name>carbamoyl phosphate</name>
        <dbReference type="ChEBI" id="CHEBI:58228"/>
    </ligand>
</feature>
<protein>
    <recommendedName>
        <fullName evidence="1">Aspartate carbamoyltransferase catalytic subunit</fullName>
        <ecNumber evidence="1">2.1.3.2</ecNumber>
    </recommendedName>
    <alternativeName>
        <fullName evidence="1">Aspartate transcarbamylase</fullName>
        <shortName evidence="1">ATCase</shortName>
    </alternativeName>
</protein>
<proteinExistence type="inferred from homology"/>